<protein>
    <recommendedName>
        <fullName>Major NAD(P)H-flavin oxidoreductase</fullName>
        <ecNumber>1.6.99.-</ecNumber>
    </recommendedName>
    <alternativeName>
        <fullName>FRASE I</fullName>
    </alternativeName>
</protein>
<keyword id="KW-0002">3D-structure</keyword>
<keyword id="KW-0903">Direct protein sequencing</keyword>
<keyword id="KW-0274">FAD</keyword>
<keyword id="KW-0285">Flavoprotein</keyword>
<keyword id="KW-0288">FMN</keyword>
<keyword id="KW-0455">Luminescence</keyword>
<keyword id="KW-0520">NAD</keyword>
<keyword id="KW-0521">NADP</keyword>
<keyword id="KW-0560">Oxidoreductase</keyword>
<reference key="1">
    <citation type="journal article" date="1994" name="J. Bacteriol.">
        <title>Identification of the gene encoding the major NAD(P)H-flavin oxidoreductase of the bioluminescent bacterium Vibrio fischeri ATCC 7744.</title>
        <authorList>
            <person name="Zenno S."/>
            <person name="Saigo K."/>
            <person name="Kanoh H."/>
            <person name="Inouye S."/>
        </authorList>
    </citation>
    <scope>NUCLEOTIDE SEQUENCE [GENOMIC DNA]</scope>
    <scope>PARTIAL PROTEIN SEQUENCE</scope>
    <source>
        <strain>ATCC 7744 / DSM 507 / NCIMB 1281 / 398</strain>
    </source>
</reference>
<reference key="2">
    <citation type="submission" date="1999-09" db="EMBL/GenBank/DDBJ databases">
        <authorList>
            <person name="Zenno S."/>
            <person name="Saigo K."/>
            <person name="Kanoh H."/>
            <person name="Inouye S."/>
        </authorList>
    </citation>
    <scope>SEQUENCE REVISION TO 61 AND 213</scope>
</reference>
<reference key="3">
    <citation type="journal article" date="1994" name="FEBS Lett.">
        <title>NAD(P)H-flavin oxidoreductase from the bioluminescent bacterium, Vibrio fischeri ATCC 7744, is a flavoprotein.</title>
        <authorList>
            <person name="Inouye S."/>
        </authorList>
    </citation>
    <scope>CHARACTERIZATION</scope>
    <source>
        <strain>ATCC 7744 / DSM 507 / NCIMB 1281 / 398</strain>
    </source>
</reference>
<reference key="4">
    <citation type="journal article" date="1998" name="J. Mol. Biol.">
        <title>1.8-A crystal structure of the major NAD(P)H:FMN oxidoreductase of a bioluminescent bacterium, Vibrio fischeri: overall structure, cofactor and substrate-analog binding, and comparison with related flavoproteins.</title>
        <authorList>
            <person name="Koike H."/>
            <person name="Sasaki H."/>
            <person name="Kobori T."/>
            <person name="Zenno S."/>
            <person name="Saigo K."/>
            <person name="Murphy M.E."/>
            <person name="Adman E.T."/>
            <person name="Tanokura M."/>
        </authorList>
    </citation>
    <scope>X-RAY CRYSTALLOGRAPHY (1.8 ANGSTROMS) IN COMPLEXES WITH FMN AND SUBSTRATE ANALOGS</scope>
    <scope>SUBUNIT</scope>
    <source>
        <strain>ATCC 7744 / DSM 507 / NCIMB 1281 / 398</strain>
    </source>
</reference>
<accession>P46072</accession>
<feature type="initiator methionine" description="Removed">
    <location>
        <position position="1"/>
    </location>
</feature>
<feature type="chain" id="PRO_0000072714" description="Major NAD(P)H-flavin oxidoreductase">
    <location>
        <begin position="2"/>
        <end position="218"/>
    </location>
</feature>
<feature type="binding site">
    <location>
        <begin position="12"/>
        <end position="16"/>
    </location>
    <ligand>
        <name>FMN</name>
        <dbReference type="ChEBI" id="CHEBI:58210"/>
    </ligand>
</feature>
<feature type="binding site">
    <location>
        <position position="73"/>
    </location>
    <ligand>
        <name>FMN</name>
        <dbReference type="ChEBI" id="CHEBI:58210"/>
    </ligand>
</feature>
<feature type="binding site" evidence="1">
    <location>
        <begin position="154"/>
        <end position="159"/>
    </location>
    <ligand>
        <name>NAD(+)</name>
        <dbReference type="ChEBI" id="CHEBI:57540"/>
    </ligand>
</feature>
<feature type="binding site">
    <location>
        <begin position="165"/>
        <end position="166"/>
    </location>
    <ligand>
        <name>FMN</name>
        <dbReference type="ChEBI" id="CHEBI:58210"/>
    </ligand>
</feature>
<feature type="binding site">
    <location>
        <begin position="206"/>
        <end position="208"/>
    </location>
    <ligand>
        <name>FMN</name>
        <dbReference type="ChEBI" id="CHEBI:58210"/>
    </ligand>
</feature>
<feature type="helix" evidence="5">
    <location>
        <begin position="4"/>
        <end position="11"/>
    </location>
</feature>
<feature type="strand" evidence="5">
    <location>
        <begin position="16"/>
        <end position="18"/>
    </location>
</feature>
<feature type="helix" evidence="5">
    <location>
        <begin position="26"/>
        <end position="37"/>
    </location>
</feature>
<feature type="helix" evidence="5">
    <location>
        <begin position="42"/>
        <end position="44"/>
    </location>
</feature>
<feature type="strand" evidence="5">
    <location>
        <begin position="48"/>
        <end position="53"/>
    </location>
</feature>
<feature type="helix" evidence="5">
    <location>
        <begin position="56"/>
        <end position="64"/>
    </location>
</feature>
<feature type="strand" evidence="5">
    <location>
        <begin position="67"/>
        <end position="69"/>
    </location>
</feature>
<feature type="helix" evidence="5">
    <location>
        <begin position="71"/>
        <end position="75"/>
    </location>
</feature>
<feature type="helix" evidence="5">
    <location>
        <begin position="76"/>
        <end position="79"/>
    </location>
</feature>
<feature type="strand" evidence="5">
    <location>
        <begin position="80"/>
        <end position="90"/>
    </location>
</feature>
<feature type="helix" evidence="5">
    <location>
        <begin position="94"/>
        <end position="106"/>
    </location>
</feature>
<feature type="helix" evidence="5">
    <location>
        <begin position="112"/>
        <end position="118"/>
    </location>
</feature>
<feature type="helix" evidence="5">
    <location>
        <begin position="119"/>
        <end position="122"/>
    </location>
</feature>
<feature type="helix" evidence="5">
    <location>
        <begin position="123"/>
        <end position="127"/>
    </location>
</feature>
<feature type="strand" evidence="4">
    <location>
        <begin position="131"/>
        <end position="133"/>
    </location>
</feature>
<feature type="helix" evidence="5">
    <location>
        <begin position="136"/>
        <end position="157"/>
    </location>
</feature>
<feature type="strand" evidence="5">
    <location>
        <begin position="160"/>
        <end position="164"/>
    </location>
</feature>
<feature type="helix" evidence="5">
    <location>
        <begin position="169"/>
        <end position="175"/>
    </location>
</feature>
<feature type="turn" evidence="5">
    <location>
        <begin position="176"/>
        <end position="182"/>
    </location>
</feature>
<feature type="strand" evidence="5">
    <location>
        <begin position="183"/>
        <end position="192"/>
    </location>
</feature>
<feature type="turn" evidence="5">
    <location>
        <begin position="196"/>
        <end position="198"/>
    </location>
</feature>
<feature type="helix" evidence="5">
    <location>
        <begin position="200"/>
        <end position="203"/>
    </location>
</feature>
<feature type="helix" evidence="5">
    <location>
        <begin position="211"/>
        <end position="214"/>
    </location>
</feature>
<feature type="strand" evidence="5">
    <location>
        <begin position="215"/>
        <end position="217"/>
    </location>
</feature>
<dbReference type="EC" id="1.6.99.-"/>
<dbReference type="EMBL" id="D17743">
    <property type="protein sequence ID" value="BAA04595.2"/>
    <property type="molecule type" value="Genomic_DNA"/>
</dbReference>
<dbReference type="PIR" id="S46241">
    <property type="entry name" value="S46241"/>
</dbReference>
<dbReference type="PDB" id="1V5Y">
    <property type="method" value="X-ray"/>
    <property type="resolution" value="1.90 A"/>
    <property type="chains" value="A/B=2-218"/>
</dbReference>
<dbReference type="PDB" id="1V5Z">
    <property type="method" value="X-ray"/>
    <property type="resolution" value="2.00 A"/>
    <property type="chains" value="A/B=2-218"/>
</dbReference>
<dbReference type="PDB" id="1VFR">
    <property type="method" value="X-ray"/>
    <property type="resolution" value="1.80 A"/>
    <property type="chains" value="A/B=1-218"/>
</dbReference>
<dbReference type="PDBsum" id="1V5Y"/>
<dbReference type="PDBsum" id="1V5Z"/>
<dbReference type="PDBsum" id="1VFR"/>
<dbReference type="SMR" id="P46072"/>
<dbReference type="DrugBank" id="DB03410">
    <property type="generic name" value="4-hydroxycoumarin"/>
</dbReference>
<dbReference type="DrugBank" id="DB03247">
    <property type="generic name" value="Flavin mononucleotide"/>
</dbReference>
<dbReference type="DrugBank" id="DB01650">
    <property type="generic name" value="trans-2-hydroxycinnamic acid"/>
</dbReference>
<dbReference type="EvolutionaryTrace" id="P46072"/>
<dbReference type="GO" id="GO:0016491">
    <property type="term" value="F:oxidoreductase activity"/>
    <property type="evidence" value="ECO:0007669"/>
    <property type="project" value="UniProtKB-KW"/>
</dbReference>
<dbReference type="GO" id="GO:0008218">
    <property type="term" value="P:bioluminescence"/>
    <property type="evidence" value="ECO:0007669"/>
    <property type="project" value="UniProtKB-KW"/>
</dbReference>
<dbReference type="CDD" id="cd02149">
    <property type="entry name" value="NfsB-like"/>
    <property type="match status" value="1"/>
</dbReference>
<dbReference type="Gene3D" id="3.40.109.10">
    <property type="entry name" value="NADH Oxidase"/>
    <property type="match status" value="1"/>
</dbReference>
<dbReference type="InterPro" id="IPR033878">
    <property type="entry name" value="NfsB-like"/>
</dbReference>
<dbReference type="InterPro" id="IPR029479">
    <property type="entry name" value="Nitroreductase"/>
</dbReference>
<dbReference type="InterPro" id="IPR000415">
    <property type="entry name" value="Nitroreductase-like"/>
</dbReference>
<dbReference type="PANTHER" id="PTHR43673">
    <property type="entry name" value="NAD(P)H NITROREDUCTASE YDGI-RELATED"/>
    <property type="match status" value="1"/>
</dbReference>
<dbReference type="PANTHER" id="PTHR43673:SF10">
    <property type="entry name" value="NADH DEHYDROGENASE_NAD(P)H NITROREDUCTASE XCC3605-RELATED"/>
    <property type="match status" value="1"/>
</dbReference>
<dbReference type="Pfam" id="PF00881">
    <property type="entry name" value="Nitroreductase"/>
    <property type="match status" value="1"/>
</dbReference>
<dbReference type="SUPFAM" id="SSF55469">
    <property type="entry name" value="FMN-dependent nitroreductase-like"/>
    <property type="match status" value="1"/>
</dbReference>
<proteinExistence type="evidence at protein level"/>
<evidence type="ECO:0000250" key="1"/>
<evidence type="ECO:0000269" key="2">
    <source>
    </source>
</evidence>
<evidence type="ECO:0000305" key="3"/>
<evidence type="ECO:0007829" key="4">
    <source>
        <dbReference type="PDB" id="1V5Y"/>
    </source>
</evidence>
<evidence type="ECO:0007829" key="5">
    <source>
        <dbReference type="PDB" id="1VFR"/>
    </source>
</evidence>
<organism>
    <name type="scientific">Aliivibrio fischeri</name>
    <name type="common">Vibrio fischeri</name>
    <dbReference type="NCBI Taxonomy" id="668"/>
    <lineage>
        <taxon>Bacteria</taxon>
        <taxon>Pseudomonadati</taxon>
        <taxon>Pseudomonadota</taxon>
        <taxon>Gammaproteobacteria</taxon>
        <taxon>Vibrionales</taxon>
        <taxon>Vibrionaceae</taxon>
        <taxon>Aliivibrio</taxon>
    </lineage>
</organism>
<name>FRA1_ALIFS</name>
<comment type="function">
    <text>Involved in bioluminescence. It is a good supplier of reduced flavin mononucleotide (FMNH2) to the bioluminescence reaction. Major FMN reductase. It is capable of using both NADH and NADPH as electron donors. As electron acceptor, FMN is the most effective, FAD is considerably effective, and riboflavin is the least effective.</text>
</comment>
<comment type="cofactor">
    <cofactor>
        <name>FMN</name>
        <dbReference type="ChEBI" id="CHEBI:58210"/>
    </cofactor>
</comment>
<comment type="subunit">
    <text evidence="2">Homodimer.</text>
</comment>
<comment type="similarity">
    <text evidence="3">Belongs to the nitroreductase family.</text>
</comment>
<sequence length="218" mass="24721">MTHPIIHDLENRYTSKKYDPSKKVSQEDLAVLLEALRLSASSINSQPWKFIVIESDAAKQRMHDSFANMHQFNQPHIKACSHVILFANKLSYTRDDYDVVLSKAVADKRITEEQKEAAFASFKFVELNCDENGEHKAWTKPQAYLALGNALHTLARLNIDSTTMEGIDPELLSEIFADELKGYECHVALAIGYHHPSEDYNASLPKSRKAFEDVITIL</sequence>